<reference key="1">
    <citation type="journal article" date="1987" name="Cell">
        <title>The genome organization of STLV-3 is similar to that of the AIDS virus except for a truncated transmembrane protein.</title>
        <authorList>
            <person name="Hirsch V."/>
            <person name="Riedel N."/>
            <person name="Mullins J.I."/>
        </authorList>
    </citation>
    <scope>NUCLEOTIDE SEQUENCE [GENOMIC RNA]</scope>
</reference>
<organismHost>
    <name type="scientific">Cercopithecidae</name>
    <name type="common">Old World monkeys</name>
    <dbReference type="NCBI Taxonomy" id="9527"/>
</organismHost>
<accession>P11265</accession>
<feature type="chain" id="PRO_0000085468" description="Protein Vpr">
    <location>
        <begin position="1"/>
        <end position="122"/>
    </location>
</feature>
<feature type="modified residue" description="Phosphoserine; by host" evidence="1">
    <location>
        <position position="80"/>
    </location>
</feature>
<keyword id="KW-0010">Activator</keyword>
<keyword id="KW-0014">AIDS</keyword>
<keyword id="KW-0131">Cell cycle</keyword>
<keyword id="KW-1048">Host nucleus</keyword>
<keyword id="KW-0945">Host-virus interaction</keyword>
<keyword id="KW-0597">Phosphoprotein</keyword>
<keyword id="KW-0804">Transcription</keyword>
<keyword id="KW-0805">Transcription regulation</keyword>
<keyword id="KW-1163">Viral penetration into host nucleus</keyword>
<keyword id="KW-0946">Virion</keyword>
<keyword id="KW-1160">Virus entry into host cell</keyword>
<comment type="function">
    <text evidence="1">Stimulates gene expression driven by the HIV-2 LTR. Prevents infected cells from undergoing mitosis and proliferating, by inducing arrest or delay in the G2 phase of the cell cycle. Cell cycle arrest creates a favorable environment for maximizing viral expression and production (By similarity).</text>
</comment>
<comment type="subunit">
    <text evidence="1">Interacts with human UNG.</text>
</comment>
<comment type="subcellular location">
    <subcellularLocation>
        <location>Virion</location>
    </subcellularLocation>
    <subcellularLocation>
        <location evidence="1">Host nucleus</location>
    </subcellularLocation>
</comment>
<comment type="miscellaneous">
    <text>This is a macaque isolate.</text>
</comment>
<name>VPR_SIVML</name>
<organism>
    <name type="scientific">Simian immunodeficiency virus (isolate K78)</name>
    <name type="common">SIV-mac</name>
    <name type="synonym">Simian immunodeficiency virus rhesus monkey</name>
    <dbReference type="NCBI Taxonomy" id="11736"/>
    <lineage>
        <taxon>Viruses</taxon>
        <taxon>Riboviria</taxon>
        <taxon>Pararnavirae</taxon>
        <taxon>Artverviricota</taxon>
        <taxon>Revtraviricetes</taxon>
        <taxon>Ortervirales</taxon>
        <taxon>Retroviridae</taxon>
        <taxon>Orthoretrovirinae</taxon>
        <taxon>Lentivirus</taxon>
        <taxon>Simian immunodeficiency virus</taxon>
    </lineage>
</organism>
<gene>
    <name type="primary">vpr</name>
</gene>
<proteinExistence type="inferred from homology"/>
<protein>
    <recommendedName>
        <fullName>Protein Vpr</fullName>
    </recommendedName>
    <alternativeName>
        <fullName>R ORF protein</fullName>
    </alternativeName>
    <alternativeName>
        <fullName>Viral protein R</fullName>
    </alternativeName>
</protein>
<evidence type="ECO:0000250" key="1"/>
<sequence>MEERPLENEGPQREPWDEWVVEVLEELKEEALKHFDPRLLTALGNHIYNRHGDTLEGAGELIRILQRALFMHFRGGCNHSRIGQTWGRKSSLNYTALLRRAITHAIVKSVATIASFVFLKRD</sequence>
<dbReference type="PIR" id="E26737">
    <property type="entry name" value="ASLJRS"/>
</dbReference>
<dbReference type="SMR" id="P11265"/>
<dbReference type="GO" id="GO:0043657">
    <property type="term" value="C:host cell"/>
    <property type="evidence" value="ECO:0007669"/>
    <property type="project" value="GOC"/>
</dbReference>
<dbReference type="GO" id="GO:0042025">
    <property type="term" value="C:host cell nucleus"/>
    <property type="evidence" value="ECO:0007669"/>
    <property type="project" value="UniProtKB-SubCell"/>
</dbReference>
<dbReference type="GO" id="GO:0044423">
    <property type="term" value="C:virion component"/>
    <property type="evidence" value="ECO:0007669"/>
    <property type="project" value="UniProtKB-KW"/>
</dbReference>
<dbReference type="GO" id="GO:0046718">
    <property type="term" value="P:symbiont entry into host cell"/>
    <property type="evidence" value="ECO:0007669"/>
    <property type="project" value="UniProtKB-KW"/>
</dbReference>
<dbReference type="GO" id="GO:0075732">
    <property type="term" value="P:viral penetration into host nucleus"/>
    <property type="evidence" value="ECO:0007669"/>
    <property type="project" value="UniProtKB-KW"/>
</dbReference>
<dbReference type="Gene3D" id="6.10.210.10">
    <property type="match status" value="1"/>
</dbReference>
<dbReference type="Gene3D" id="1.20.5.90">
    <property type="entry name" value="VpR/VpX protein, C-terminal domain"/>
    <property type="match status" value="1"/>
</dbReference>
<dbReference type="InterPro" id="IPR000012">
    <property type="entry name" value="RetroV_VpR/X"/>
</dbReference>
<dbReference type="Pfam" id="PF00522">
    <property type="entry name" value="VPR"/>
    <property type="match status" value="1"/>
</dbReference>
<dbReference type="PRINTS" id="PR00444">
    <property type="entry name" value="HIVVPRVPX"/>
</dbReference>